<organism>
    <name type="scientific">Saccharomyces cerevisiae (strain ATCC 204508 / S288c)</name>
    <name type="common">Baker's yeast</name>
    <dbReference type="NCBI Taxonomy" id="559292"/>
    <lineage>
        <taxon>Eukaryota</taxon>
        <taxon>Fungi</taxon>
        <taxon>Dikarya</taxon>
        <taxon>Ascomycota</taxon>
        <taxon>Saccharomycotina</taxon>
        <taxon>Saccharomycetes</taxon>
        <taxon>Saccharomycetales</taxon>
        <taxon>Saccharomycetaceae</taxon>
        <taxon>Saccharomyces</taxon>
    </lineage>
</organism>
<accession>P05745</accession>
<accession>D6W018</accession>
<dbReference type="EMBL" id="Z47815">
    <property type="protein sequence ID" value="CAA87815.1"/>
    <property type="molecule type" value="Genomic_DNA"/>
</dbReference>
<dbReference type="EMBL" id="BK006946">
    <property type="protein sequence ID" value="DAA10092.1"/>
    <property type="molecule type" value="Genomic_DNA"/>
</dbReference>
<dbReference type="PIR" id="S11263">
    <property type="entry name" value="S50922"/>
</dbReference>
<dbReference type="RefSeq" id="NP_013920.1">
    <property type="nucleotide sequence ID" value="NM_001182701.1"/>
</dbReference>
<dbReference type="PDB" id="3J6X">
    <property type="method" value="EM"/>
    <property type="resolution" value="6.10 A"/>
    <property type="chains" value="76=1-100"/>
</dbReference>
<dbReference type="PDB" id="3J6Y">
    <property type="method" value="EM"/>
    <property type="resolution" value="6.10 A"/>
    <property type="chains" value="76=1-100"/>
</dbReference>
<dbReference type="PDB" id="3J77">
    <property type="method" value="EM"/>
    <property type="resolution" value="6.20 A"/>
    <property type="chains" value="86=1-100"/>
</dbReference>
<dbReference type="PDB" id="3J78">
    <property type="method" value="EM"/>
    <property type="resolution" value="6.30 A"/>
    <property type="chains" value="86=1-100"/>
</dbReference>
<dbReference type="PDB" id="3JCT">
    <property type="method" value="EM"/>
    <property type="resolution" value="3.08 A"/>
    <property type="chains" value="i=1-100"/>
</dbReference>
<dbReference type="PDB" id="4U3M">
    <property type="method" value="X-ray"/>
    <property type="resolution" value="3.00 A"/>
    <property type="chains" value="O6/o6=2-100"/>
</dbReference>
<dbReference type="PDB" id="4U3N">
    <property type="method" value="X-ray"/>
    <property type="resolution" value="3.20 A"/>
    <property type="chains" value="O6/o6=2-100"/>
</dbReference>
<dbReference type="PDB" id="4U3U">
    <property type="method" value="X-ray"/>
    <property type="resolution" value="2.90 A"/>
    <property type="chains" value="O6/o6=2-100"/>
</dbReference>
<dbReference type="PDB" id="4U4N">
    <property type="method" value="X-ray"/>
    <property type="resolution" value="3.10 A"/>
    <property type="chains" value="O6/o6=2-100"/>
</dbReference>
<dbReference type="PDB" id="4U4O">
    <property type="method" value="X-ray"/>
    <property type="resolution" value="3.60 A"/>
    <property type="chains" value="O6/o6=2-100"/>
</dbReference>
<dbReference type="PDB" id="4U4Q">
    <property type="method" value="X-ray"/>
    <property type="resolution" value="3.00 A"/>
    <property type="chains" value="O6/o6=2-100"/>
</dbReference>
<dbReference type="PDB" id="4U4R">
    <property type="method" value="X-ray"/>
    <property type="resolution" value="2.80 A"/>
    <property type="chains" value="O6/o6=2-100"/>
</dbReference>
<dbReference type="PDB" id="4U4U">
    <property type="method" value="X-ray"/>
    <property type="resolution" value="3.00 A"/>
    <property type="chains" value="O6/o6=2-100"/>
</dbReference>
<dbReference type="PDB" id="4U4Y">
    <property type="method" value="X-ray"/>
    <property type="resolution" value="3.20 A"/>
    <property type="chains" value="O6/o6=2-100"/>
</dbReference>
<dbReference type="PDB" id="4U4Z">
    <property type="method" value="X-ray"/>
    <property type="resolution" value="3.10 A"/>
    <property type="chains" value="O6/o6=2-100"/>
</dbReference>
<dbReference type="PDB" id="4U50">
    <property type="method" value="X-ray"/>
    <property type="resolution" value="3.20 A"/>
    <property type="chains" value="O6/o6=2-100"/>
</dbReference>
<dbReference type="PDB" id="4U51">
    <property type="method" value="X-ray"/>
    <property type="resolution" value="3.20 A"/>
    <property type="chains" value="O6/o6=2-100"/>
</dbReference>
<dbReference type="PDB" id="4U52">
    <property type="method" value="X-ray"/>
    <property type="resolution" value="3.00 A"/>
    <property type="chains" value="O6/o6=2-100"/>
</dbReference>
<dbReference type="PDB" id="4U53">
    <property type="method" value="X-ray"/>
    <property type="resolution" value="3.30 A"/>
    <property type="chains" value="O6/o6=2-100"/>
</dbReference>
<dbReference type="PDB" id="4U55">
    <property type="method" value="X-ray"/>
    <property type="resolution" value="3.20 A"/>
    <property type="chains" value="O6/o6=2-100"/>
</dbReference>
<dbReference type="PDB" id="4U56">
    <property type="method" value="X-ray"/>
    <property type="resolution" value="3.45 A"/>
    <property type="chains" value="O6/o6=2-100"/>
</dbReference>
<dbReference type="PDB" id="4U6F">
    <property type="method" value="X-ray"/>
    <property type="resolution" value="3.10 A"/>
    <property type="chains" value="O6/o6=2-100"/>
</dbReference>
<dbReference type="PDB" id="4V6I">
    <property type="method" value="EM"/>
    <property type="resolution" value="8.80 A"/>
    <property type="chains" value="Bk=1-100"/>
</dbReference>
<dbReference type="PDB" id="4V7F">
    <property type="method" value="EM"/>
    <property type="resolution" value="8.70 A"/>
    <property type="chains" value="g=1-100"/>
</dbReference>
<dbReference type="PDB" id="4V88">
    <property type="method" value="X-ray"/>
    <property type="resolution" value="3.00 A"/>
    <property type="chains" value="Bi/Di=1-100"/>
</dbReference>
<dbReference type="PDB" id="4V8T">
    <property type="method" value="EM"/>
    <property type="resolution" value="8.10 A"/>
    <property type="chains" value="i=1-100"/>
</dbReference>
<dbReference type="PDB" id="4V8Y">
    <property type="method" value="EM"/>
    <property type="resolution" value="4.30 A"/>
    <property type="chains" value="Bi=2-100"/>
</dbReference>
<dbReference type="PDB" id="4V8Z">
    <property type="method" value="EM"/>
    <property type="resolution" value="6.60 A"/>
    <property type="chains" value="Bi=2-100"/>
</dbReference>
<dbReference type="PDB" id="4V91">
    <property type="method" value="EM"/>
    <property type="resolution" value="3.70 A"/>
    <property type="chains" value="i=1-100"/>
</dbReference>
<dbReference type="PDB" id="5APN">
    <property type="method" value="EM"/>
    <property type="resolution" value="3.91 A"/>
    <property type="chains" value="i=1-100"/>
</dbReference>
<dbReference type="PDB" id="5APO">
    <property type="method" value="EM"/>
    <property type="resolution" value="3.41 A"/>
    <property type="chains" value="i=1-100"/>
</dbReference>
<dbReference type="PDB" id="5DAT">
    <property type="method" value="X-ray"/>
    <property type="resolution" value="3.15 A"/>
    <property type="chains" value="O6/o6=2-100"/>
</dbReference>
<dbReference type="PDB" id="5DC3">
    <property type="method" value="X-ray"/>
    <property type="resolution" value="3.25 A"/>
    <property type="chains" value="O6/o6=2-100"/>
</dbReference>
<dbReference type="PDB" id="5DGE">
    <property type="method" value="X-ray"/>
    <property type="resolution" value="3.45 A"/>
    <property type="chains" value="O6/o6=2-100"/>
</dbReference>
<dbReference type="PDB" id="5DGF">
    <property type="method" value="X-ray"/>
    <property type="resolution" value="3.30 A"/>
    <property type="chains" value="O6/o6=2-100"/>
</dbReference>
<dbReference type="PDB" id="5DGV">
    <property type="method" value="X-ray"/>
    <property type="resolution" value="3.10 A"/>
    <property type="chains" value="O6/o6=2-100"/>
</dbReference>
<dbReference type="PDB" id="5FCI">
    <property type="method" value="X-ray"/>
    <property type="resolution" value="3.40 A"/>
    <property type="chains" value="O6/o6=2-100"/>
</dbReference>
<dbReference type="PDB" id="5FCJ">
    <property type="method" value="X-ray"/>
    <property type="resolution" value="3.10 A"/>
    <property type="chains" value="O6/o6=2-100"/>
</dbReference>
<dbReference type="PDB" id="5GAK">
    <property type="method" value="EM"/>
    <property type="resolution" value="3.88 A"/>
    <property type="chains" value="k=1-100"/>
</dbReference>
<dbReference type="PDB" id="5H4P">
    <property type="method" value="EM"/>
    <property type="resolution" value="3.07 A"/>
    <property type="chains" value="i=1-100"/>
</dbReference>
<dbReference type="PDB" id="5I4L">
    <property type="method" value="X-ray"/>
    <property type="resolution" value="3.10 A"/>
    <property type="chains" value="O6/o6=2-100"/>
</dbReference>
<dbReference type="PDB" id="5JCS">
    <property type="method" value="EM"/>
    <property type="resolution" value="9.50 A"/>
    <property type="chains" value="i=1-100"/>
</dbReference>
<dbReference type="PDB" id="5JUO">
    <property type="method" value="EM"/>
    <property type="resolution" value="4.00 A"/>
    <property type="chains" value="NA=1-100"/>
</dbReference>
<dbReference type="PDB" id="5JUP">
    <property type="method" value="EM"/>
    <property type="resolution" value="3.50 A"/>
    <property type="chains" value="NA=1-100"/>
</dbReference>
<dbReference type="PDB" id="5JUS">
    <property type="method" value="EM"/>
    <property type="resolution" value="4.20 A"/>
    <property type="chains" value="NA=1-100"/>
</dbReference>
<dbReference type="PDB" id="5JUT">
    <property type="method" value="EM"/>
    <property type="resolution" value="4.00 A"/>
    <property type="chains" value="NA=1-100"/>
</dbReference>
<dbReference type="PDB" id="5JUU">
    <property type="method" value="EM"/>
    <property type="resolution" value="4.00 A"/>
    <property type="chains" value="NA=1-100"/>
</dbReference>
<dbReference type="PDB" id="5LYB">
    <property type="method" value="X-ray"/>
    <property type="resolution" value="3.25 A"/>
    <property type="chains" value="O6/o6=2-100"/>
</dbReference>
<dbReference type="PDB" id="5M1J">
    <property type="method" value="EM"/>
    <property type="resolution" value="3.30 A"/>
    <property type="chains" value="i5=2-100"/>
</dbReference>
<dbReference type="PDB" id="5MC6">
    <property type="method" value="EM"/>
    <property type="resolution" value="3.80 A"/>
    <property type="chains" value="AC=1-100"/>
</dbReference>
<dbReference type="PDB" id="5MEI">
    <property type="method" value="X-ray"/>
    <property type="resolution" value="3.50 A"/>
    <property type="chains" value="AJ/DK=2-100"/>
</dbReference>
<dbReference type="PDB" id="5NDG">
    <property type="method" value="X-ray"/>
    <property type="resolution" value="3.70 A"/>
    <property type="chains" value="O6/o6=2-100"/>
</dbReference>
<dbReference type="PDB" id="5NDV">
    <property type="method" value="X-ray"/>
    <property type="resolution" value="3.30 A"/>
    <property type="chains" value="O6/o6=2-100"/>
</dbReference>
<dbReference type="PDB" id="5NDW">
    <property type="method" value="X-ray"/>
    <property type="resolution" value="3.70 A"/>
    <property type="chains" value="O6/o6=2-100"/>
</dbReference>
<dbReference type="PDB" id="5OBM">
    <property type="method" value="X-ray"/>
    <property type="resolution" value="3.40 A"/>
    <property type="chains" value="O6/o6=2-100"/>
</dbReference>
<dbReference type="PDB" id="5ON6">
    <property type="method" value="X-ray"/>
    <property type="resolution" value="3.10 A"/>
    <property type="chains" value="AJ/DK=2-100"/>
</dbReference>
<dbReference type="PDB" id="5T62">
    <property type="method" value="EM"/>
    <property type="resolution" value="3.30 A"/>
    <property type="chains" value="v=1-100"/>
</dbReference>
<dbReference type="PDB" id="5T6R">
    <property type="method" value="EM"/>
    <property type="resolution" value="4.50 A"/>
    <property type="chains" value="v=1-100"/>
</dbReference>
<dbReference type="PDB" id="5TBW">
    <property type="method" value="X-ray"/>
    <property type="resolution" value="3.00 A"/>
    <property type="chains" value="AJ/DK=2-100"/>
</dbReference>
<dbReference type="PDB" id="5TGA">
    <property type="method" value="X-ray"/>
    <property type="resolution" value="3.30 A"/>
    <property type="chains" value="O6/o6=2-100"/>
</dbReference>
<dbReference type="PDB" id="5TGM">
    <property type="method" value="X-ray"/>
    <property type="resolution" value="3.50 A"/>
    <property type="chains" value="O6/o6=2-100"/>
</dbReference>
<dbReference type="PDB" id="5Z3G">
    <property type="method" value="EM"/>
    <property type="resolution" value="3.65 A"/>
    <property type="chains" value="m=1-100"/>
</dbReference>
<dbReference type="PDB" id="6C0F">
    <property type="method" value="EM"/>
    <property type="resolution" value="3.70 A"/>
    <property type="chains" value="i=1-100"/>
</dbReference>
<dbReference type="PDB" id="6CB1">
    <property type="method" value="EM"/>
    <property type="resolution" value="4.60 A"/>
    <property type="chains" value="i=1-100"/>
</dbReference>
<dbReference type="PDB" id="6ELZ">
    <property type="method" value="EM"/>
    <property type="resolution" value="3.30 A"/>
    <property type="chains" value="i=1-100"/>
</dbReference>
<dbReference type="PDB" id="6FT6">
    <property type="method" value="EM"/>
    <property type="resolution" value="3.90 A"/>
    <property type="chains" value="i=1-100"/>
</dbReference>
<dbReference type="PDB" id="6GQ1">
    <property type="method" value="EM"/>
    <property type="resolution" value="4.40 A"/>
    <property type="chains" value="i=2-100"/>
</dbReference>
<dbReference type="PDB" id="6GQB">
    <property type="method" value="EM"/>
    <property type="resolution" value="3.90 A"/>
    <property type="chains" value="i=2-100"/>
</dbReference>
<dbReference type="PDB" id="6GQV">
    <property type="method" value="EM"/>
    <property type="resolution" value="4.00 A"/>
    <property type="chains" value="i=2-100"/>
</dbReference>
<dbReference type="PDB" id="6HD7">
    <property type="method" value="EM"/>
    <property type="resolution" value="3.40 A"/>
    <property type="chains" value="k=1-100"/>
</dbReference>
<dbReference type="PDB" id="6HHQ">
    <property type="method" value="X-ray"/>
    <property type="resolution" value="3.10 A"/>
    <property type="chains" value="AJ/DK=1-100"/>
</dbReference>
<dbReference type="PDB" id="6I7O">
    <property type="method" value="EM"/>
    <property type="resolution" value="5.30 A"/>
    <property type="chains" value="AC/XC=2-100"/>
</dbReference>
<dbReference type="PDB" id="6M62">
    <property type="method" value="EM"/>
    <property type="resolution" value="3.20 A"/>
    <property type="chains" value="i=1-100"/>
</dbReference>
<dbReference type="PDB" id="6N8J">
    <property type="method" value="EM"/>
    <property type="resolution" value="3.50 A"/>
    <property type="chains" value="i=1-100"/>
</dbReference>
<dbReference type="PDB" id="6N8K">
    <property type="method" value="EM"/>
    <property type="resolution" value="3.60 A"/>
    <property type="chains" value="i=1-100"/>
</dbReference>
<dbReference type="PDB" id="6N8L">
    <property type="method" value="EM"/>
    <property type="resolution" value="3.60 A"/>
    <property type="chains" value="i=1-100"/>
</dbReference>
<dbReference type="PDB" id="6N8M">
    <property type="method" value="EM"/>
    <property type="resolution" value="3.50 A"/>
    <property type="chains" value="v=1-100"/>
</dbReference>
<dbReference type="PDB" id="6N8N">
    <property type="method" value="EM"/>
    <property type="resolution" value="3.80 A"/>
    <property type="chains" value="v=1-100"/>
</dbReference>
<dbReference type="PDB" id="6N8O">
    <property type="method" value="EM"/>
    <property type="resolution" value="3.50 A"/>
    <property type="chains" value="v=1-100"/>
</dbReference>
<dbReference type="PDB" id="6OIG">
    <property type="method" value="EM"/>
    <property type="resolution" value="3.80 A"/>
    <property type="chains" value="i=2-100"/>
</dbReference>
<dbReference type="PDB" id="6Q8Y">
    <property type="method" value="EM"/>
    <property type="resolution" value="3.10 A"/>
    <property type="chains" value="AC=1-100"/>
</dbReference>
<dbReference type="PDB" id="6QIK">
    <property type="method" value="EM"/>
    <property type="resolution" value="3.10 A"/>
    <property type="chains" value="h=1-100"/>
</dbReference>
<dbReference type="PDB" id="6QT0">
    <property type="method" value="EM"/>
    <property type="resolution" value="3.40 A"/>
    <property type="chains" value="h=1-100"/>
</dbReference>
<dbReference type="PDB" id="6QTZ">
    <property type="method" value="EM"/>
    <property type="resolution" value="3.50 A"/>
    <property type="chains" value="h=1-100"/>
</dbReference>
<dbReference type="PDB" id="6R84">
    <property type="method" value="EM"/>
    <property type="resolution" value="3.60 A"/>
    <property type="chains" value="k=2-100"/>
</dbReference>
<dbReference type="PDB" id="6R86">
    <property type="method" value="EM"/>
    <property type="resolution" value="3.40 A"/>
    <property type="chains" value="k=2-100"/>
</dbReference>
<dbReference type="PDB" id="6R87">
    <property type="method" value="EM"/>
    <property type="resolution" value="3.40 A"/>
    <property type="chains" value="k=2-100"/>
</dbReference>
<dbReference type="PDB" id="6RI5">
    <property type="method" value="EM"/>
    <property type="resolution" value="3.30 A"/>
    <property type="chains" value="h=1-100"/>
</dbReference>
<dbReference type="PDB" id="6RZZ">
    <property type="method" value="EM"/>
    <property type="resolution" value="3.20 A"/>
    <property type="chains" value="h=1-100"/>
</dbReference>
<dbReference type="PDB" id="6S05">
    <property type="method" value="EM"/>
    <property type="resolution" value="3.90 A"/>
    <property type="chains" value="h=1-100"/>
</dbReference>
<dbReference type="PDB" id="6S47">
    <property type="method" value="EM"/>
    <property type="resolution" value="3.28 A"/>
    <property type="chains" value="Ak=2-100"/>
</dbReference>
<dbReference type="PDB" id="6SNT">
    <property type="method" value="EM"/>
    <property type="resolution" value="2.80 A"/>
    <property type="chains" value="ah=1-100"/>
</dbReference>
<dbReference type="PDB" id="6SV4">
    <property type="method" value="EM"/>
    <property type="resolution" value="3.30 A"/>
    <property type="chains" value="AC/XC/zC=1-100"/>
</dbReference>
<dbReference type="PDB" id="6T4Q">
    <property type="method" value="EM"/>
    <property type="resolution" value="2.60 A"/>
    <property type="chains" value="Li=2-100"/>
</dbReference>
<dbReference type="PDB" id="6T7I">
    <property type="method" value="EM"/>
    <property type="resolution" value="3.20 A"/>
    <property type="chains" value="Li=1-100"/>
</dbReference>
<dbReference type="PDB" id="6T7T">
    <property type="method" value="EM"/>
    <property type="resolution" value="3.10 A"/>
    <property type="chains" value="Li=1-100"/>
</dbReference>
<dbReference type="PDB" id="6T83">
    <property type="method" value="EM"/>
    <property type="resolution" value="4.00 A"/>
    <property type="chains" value="T/ib=1-100"/>
</dbReference>
<dbReference type="PDB" id="6TB3">
    <property type="method" value="EM"/>
    <property type="resolution" value="2.80 A"/>
    <property type="chains" value="AC=2-100"/>
</dbReference>
<dbReference type="PDB" id="6TNU">
    <property type="method" value="EM"/>
    <property type="resolution" value="3.10 A"/>
    <property type="chains" value="AC=2-100"/>
</dbReference>
<dbReference type="PDB" id="6WOO">
    <property type="method" value="EM"/>
    <property type="resolution" value="2.90 A"/>
    <property type="chains" value="i=3-100"/>
</dbReference>
<dbReference type="PDB" id="6XIQ">
    <property type="method" value="EM"/>
    <property type="resolution" value="4.20 A"/>
    <property type="chains" value="i=1-100"/>
</dbReference>
<dbReference type="PDB" id="6XIR">
    <property type="method" value="EM"/>
    <property type="resolution" value="3.20 A"/>
    <property type="chains" value="i=1-100"/>
</dbReference>
<dbReference type="PDB" id="6YLG">
    <property type="method" value="EM"/>
    <property type="resolution" value="3.00 A"/>
    <property type="chains" value="i=1-100"/>
</dbReference>
<dbReference type="PDB" id="6YLH">
    <property type="method" value="EM"/>
    <property type="resolution" value="3.10 A"/>
    <property type="chains" value="i=1-100"/>
</dbReference>
<dbReference type="PDB" id="6YLX">
    <property type="method" value="EM"/>
    <property type="resolution" value="3.90 A"/>
    <property type="chains" value="i=1-100"/>
</dbReference>
<dbReference type="PDB" id="6YLY">
    <property type="method" value="EM"/>
    <property type="resolution" value="3.80 A"/>
    <property type="chains" value="i=1-100"/>
</dbReference>
<dbReference type="PDB" id="6Z6J">
    <property type="method" value="EM"/>
    <property type="resolution" value="3.40 A"/>
    <property type="chains" value="Li=1-100"/>
</dbReference>
<dbReference type="PDB" id="6Z6K">
    <property type="method" value="EM"/>
    <property type="resolution" value="3.40 A"/>
    <property type="chains" value="Li=1-100"/>
</dbReference>
<dbReference type="PDB" id="7AZY">
    <property type="method" value="EM"/>
    <property type="resolution" value="2.88 A"/>
    <property type="chains" value="d=1-100"/>
</dbReference>
<dbReference type="PDB" id="7B7D">
    <property type="method" value="EM"/>
    <property type="resolution" value="3.30 A"/>
    <property type="chains" value="Le=2-100"/>
</dbReference>
<dbReference type="PDB" id="7BT6">
    <property type="method" value="EM"/>
    <property type="resolution" value="3.12 A"/>
    <property type="chains" value="i=1-100"/>
</dbReference>
<dbReference type="PDB" id="7BTB">
    <property type="method" value="EM"/>
    <property type="resolution" value="3.22 A"/>
    <property type="chains" value="i=1-100"/>
</dbReference>
<dbReference type="PDB" id="7MPI">
    <property type="method" value="EM"/>
    <property type="resolution" value="3.05 A"/>
    <property type="chains" value="Ai=2-100"/>
</dbReference>
<dbReference type="PDB" id="7MPJ">
    <property type="method" value="EM"/>
    <property type="resolution" value="2.70 A"/>
    <property type="chains" value="Ai=2-100"/>
</dbReference>
<dbReference type="PDB" id="7N8B">
    <property type="method" value="EM"/>
    <property type="resolution" value="3.05 A"/>
    <property type="chains" value="Ai=2-100"/>
</dbReference>
<dbReference type="PDB" id="7NAC">
    <property type="method" value="EM"/>
    <property type="resolution" value="3.04 A"/>
    <property type="chains" value="i=1-100"/>
</dbReference>
<dbReference type="PDB" id="7NRC">
    <property type="method" value="EM"/>
    <property type="resolution" value="3.90 A"/>
    <property type="chains" value="Lk=2-100"/>
</dbReference>
<dbReference type="PDB" id="7NRD">
    <property type="method" value="EM"/>
    <property type="resolution" value="4.36 A"/>
    <property type="chains" value="Lk=2-100"/>
</dbReference>
<dbReference type="PDB" id="7OF1">
    <property type="method" value="EM"/>
    <property type="resolution" value="3.10 A"/>
    <property type="chains" value="i=1-100"/>
</dbReference>
<dbReference type="PDB" id="7OH3">
    <property type="method" value="EM"/>
    <property type="resolution" value="3.40 A"/>
    <property type="chains" value="i=1-100"/>
</dbReference>
<dbReference type="PDB" id="7OHP">
    <property type="method" value="EM"/>
    <property type="resolution" value="3.90 A"/>
    <property type="chains" value="i=1-100"/>
</dbReference>
<dbReference type="PDB" id="7OHQ">
    <property type="method" value="EM"/>
    <property type="resolution" value="3.10 A"/>
    <property type="chains" value="i=1-100"/>
</dbReference>
<dbReference type="PDB" id="7OHR">
    <property type="method" value="EM"/>
    <property type="resolution" value="4.72 A"/>
    <property type="chains" value="i=1-100"/>
</dbReference>
<dbReference type="PDB" id="7OHS">
    <property type="method" value="EM"/>
    <property type="resolution" value="4.38 A"/>
    <property type="chains" value="i=1-100"/>
</dbReference>
<dbReference type="PDB" id="7OHU">
    <property type="method" value="EM"/>
    <property type="resolution" value="3.70 A"/>
    <property type="chains" value="i=1-100"/>
</dbReference>
<dbReference type="PDB" id="7OHV">
    <property type="method" value="EM"/>
    <property type="resolution" value="3.90 A"/>
    <property type="chains" value="i=1-100"/>
</dbReference>
<dbReference type="PDB" id="7OHW">
    <property type="method" value="EM"/>
    <property type="resolution" value="3.50 A"/>
    <property type="chains" value="i=1-100"/>
</dbReference>
<dbReference type="PDB" id="7OHX">
    <property type="method" value="EM"/>
    <property type="resolution" value="3.30 A"/>
    <property type="chains" value="i=1-100"/>
</dbReference>
<dbReference type="PDB" id="7OSA">
    <property type="method" value="X-ray"/>
    <property type="resolution" value="3.00 A"/>
    <property type="chains" value="eL36=1-100"/>
</dbReference>
<dbReference type="PDB" id="7OSM">
    <property type="method" value="X-ray"/>
    <property type="resolution" value="3.00 A"/>
    <property type="chains" value="eL36=1-100"/>
</dbReference>
<dbReference type="PDB" id="7R6K">
    <property type="method" value="EM"/>
    <property type="resolution" value="3.17 A"/>
    <property type="chains" value="i=1-100"/>
</dbReference>
<dbReference type="PDB" id="7R6Q">
    <property type="method" value="EM"/>
    <property type="resolution" value="2.98 A"/>
    <property type="chains" value="i=1-100"/>
</dbReference>
<dbReference type="PDB" id="7R7A">
    <property type="method" value="EM"/>
    <property type="resolution" value="3.04 A"/>
    <property type="chains" value="i=1-100"/>
</dbReference>
<dbReference type="PDB" id="7RR5">
    <property type="method" value="EM"/>
    <property type="resolution" value="3.23 A"/>
    <property type="chains" value="Li=1-100"/>
</dbReference>
<dbReference type="PDB" id="7TOO">
    <property type="method" value="EM"/>
    <property type="resolution" value="2.70 A"/>
    <property type="chains" value="AL36=1-100"/>
</dbReference>
<dbReference type="PDB" id="7TOP">
    <property type="method" value="EM"/>
    <property type="resolution" value="2.40 A"/>
    <property type="chains" value="AL36=1-100"/>
</dbReference>
<dbReference type="PDB" id="7U0H">
    <property type="method" value="EM"/>
    <property type="resolution" value="2.76 A"/>
    <property type="chains" value="i=1-100"/>
</dbReference>
<dbReference type="PDB" id="7UG6">
    <property type="method" value="EM"/>
    <property type="resolution" value="2.90 A"/>
    <property type="chains" value="i=1-100"/>
</dbReference>
<dbReference type="PDB" id="7UOO">
    <property type="method" value="EM"/>
    <property type="resolution" value="2.34 A"/>
    <property type="chains" value="i=1-100"/>
</dbReference>
<dbReference type="PDB" id="7UQB">
    <property type="method" value="EM"/>
    <property type="resolution" value="2.43 A"/>
    <property type="chains" value="i=1-100"/>
</dbReference>
<dbReference type="PDB" id="7UQZ">
    <property type="method" value="EM"/>
    <property type="resolution" value="2.44 A"/>
    <property type="chains" value="i=2-100"/>
</dbReference>
<dbReference type="PDB" id="7V08">
    <property type="method" value="EM"/>
    <property type="resolution" value="2.36 A"/>
    <property type="chains" value="i=1-100"/>
</dbReference>
<dbReference type="PDB" id="7Z34">
    <property type="method" value="EM"/>
    <property type="resolution" value="3.80 A"/>
    <property type="chains" value="i=1-100"/>
</dbReference>
<dbReference type="PDB" id="7ZPQ">
    <property type="method" value="EM"/>
    <property type="resolution" value="3.47 A"/>
    <property type="chains" value="Bh=2-100"/>
</dbReference>
<dbReference type="PDB" id="7ZRS">
    <property type="method" value="EM"/>
    <property type="resolution" value="4.80 A"/>
    <property type="chains" value="Bh=2-100"/>
</dbReference>
<dbReference type="PDB" id="7ZS5">
    <property type="method" value="EM"/>
    <property type="resolution" value="3.20 A"/>
    <property type="chains" value="Bj=2-100"/>
</dbReference>
<dbReference type="PDB" id="7ZUW">
    <property type="method" value="EM"/>
    <property type="resolution" value="4.30 A"/>
    <property type="chains" value="Bh=2-100"/>
</dbReference>
<dbReference type="PDB" id="7ZUX">
    <property type="method" value="EM"/>
    <property type="resolution" value="2.50 A"/>
    <property type="chains" value="Eh=2-100"/>
</dbReference>
<dbReference type="PDB" id="7ZW0">
    <property type="method" value="EM"/>
    <property type="resolution" value="2.40 A"/>
    <property type="chains" value="Ll=1-100"/>
</dbReference>
<dbReference type="PDB" id="8AAF">
    <property type="method" value="EM"/>
    <property type="resolution" value="2.50 A"/>
    <property type="chains" value="V=1-100"/>
</dbReference>
<dbReference type="PDB" id="8AGT">
    <property type="method" value="EM"/>
    <property type="resolution" value="2.60 A"/>
    <property type="chains" value="V=1-100"/>
</dbReference>
<dbReference type="PDB" id="8AGU">
    <property type="method" value="EM"/>
    <property type="resolution" value="2.70 A"/>
    <property type="chains" value="V=1-100"/>
</dbReference>
<dbReference type="PDB" id="8AGV">
    <property type="method" value="EM"/>
    <property type="resolution" value="2.60 A"/>
    <property type="chains" value="V=1-100"/>
</dbReference>
<dbReference type="PDB" id="8AGW">
    <property type="method" value="EM"/>
    <property type="resolution" value="2.60 A"/>
    <property type="chains" value="V=1-100"/>
</dbReference>
<dbReference type="PDB" id="8AGX">
    <property type="method" value="EM"/>
    <property type="resolution" value="2.40 A"/>
    <property type="chains" value="V=1-100"/>
</dbReference>
<dbReference type="PDB" id="8AGZ">
    <property type="method" value="EM"/>
    <property type="resolution" value="2.60 A"/>
    <property type="chains" value="V=1-100"/>
</dbReference>
<dbReference type="PDB" id="8BIP">
    <property type="method" value="EM"/>
    <property type="resolution" value="3.10 A"/>
    <property type="chains" value="Li=2-100"/>
</dbReference>
<dbReference type="PDB" id="8BJQ">
    <property type="method" value="EM"/>
    <property type="resolution" value="3.80 A"/>
    <property type="chains" value="Li=2-100"/>
</dbReference>
<dbReference type="PDB" id="8BN3">
    <property type="method" value="EM"/>
    <property type="resolution" value="2.40 A"/>
    <property type="chains" value="O6=2-100"/>
</dbReference>
<dbReference type="PDB" id="8BQD">
    <property type="method" value="EM"/>
    <property type="resolution" value="3.90 A"/>
    <property type="chains" value="AC=2-100"/>
</dbReference>
<dbReference type="PDB" id="8BQX">
    <property type="method" value="EM"/>
    <property type="resolution" value="3.80 A"/>
    <property type="chains" value="AC=2-100"/>
</dbReference>
<dbReference type="PDB" id="8CCS">
    <property type="method" value="EM"/>
    <property type="resolution" value="1.97 A"/>
    <property type="chains" value="U=1-100"/>
</dbReference>
<dbReference type="PDB" id="8CDL">
    <property type="method" value="EM"/>
    <property type="resolution" value="2.72 A"/>
    <property type="chains" value="U=1-100"/>
</dbReference>
<dbReference type="PDB" id="8CDR">
    <property type="method" value="EM"/>
    <property type="resolution" value="2.04 A"/>
    <property type="chains" value="U=1-100"/>
</dbReference>
<dbReference type="PDB" id="8CEH">
    <property type="method" value="EM"/>
    <property type="resolution" value="2.05 A"/>
    <property type="chains" value="U=1-100"/>
</dbReference>
<dbReference type="PDB" id="8CF5">
    <property type="method" value="EM"/>
    <property type="resolution" value="2.71 A"/>
    <property type="chains" value="U=1-100"/>
</dbReference>
<dbReference type="PDB" id="8CG8">
    <property type="method" value="EM"/>
    <property type="resolution" value="2.57 A"/>
    <property type="chains" value="U=1-100"/>
</dbReference>
<dbReference type="PDB" id="8CGN">
    <property type="method" value="EM"/>
    <property type="resolution" value="2.28 A"/>
    <property type="chains" value="U=1-100"/>
</dbReference>
<dbReference type="PDB" id="8CIV">
    <property type="method" value="EM"/>
    <property type="resolution" value="2.47 A"/>
    <property type="chains" value="U=1-100"/>
</dbReference>
<dbReference type="PDB" id="8CKU">
    <property type="method" value="EM"/>
    <property type="resolution" value="3.11 A"/>
    <property type="chains" value="U=1-100"/>
</dbReference>
<dbReference type="PDB" id="8CMJ">
    <property type="method" value="EM"/>
    <property type="resolution" value="3.79 A"/>
    <property type="chains" value="U=1-100"/>
</dbReference>
<dbReference type="PDB" id="8E5T">
    <property type="method" value="EM"/>
    <property type="resolution" value="4.00 A"/>
    <property type="chains" value="i=1-100"/>
</dbReference>
<dbReference type="PDB" id="8EUB">
    <property type="method" value="EM"/>
    <property type="resolution" value="2.52 A"/>
    <property type="chains" value="Ai=1-100"/>
</dbReference>
<dbReference type="PDB" id="8EVP">
    <property type="method" value="EM"/>
    <property type="resolution" value="2.38 A"/>
    <property type="chains" value="Ai=1-100"/>
</dbReference>
<dbReference type="PDB" id="8EVQ">
    <property type="method" value="EM"/>
    <property type="resolution" value="2.72 A"/>
    <property type="chains" value="Ai=1-100"/>
</dbReference>
<dbReference type="PDB" id="8EVR">
    <property type="method" value="EM"/>
    <property type="resolution" value="2.87 A"/>
    <property type="chains" value="Ai=1-100"/>
</dbReference>
<dbReference type="PDB" id="8EVS">
    <property type="method" value="EM"/>
    <property type="resolution" value="2.62 A"/>
    <property type="chains" value="Ai=1-100"/>
</dbReference>
<dbReference type="PDB" id="8EVT">
    <property type="method" value="EM"/>
    <property type="resolution" value="2.20 A"/>
    <property type="chains" value="Ai=1-100"/>
</dbReference>
<dbReference type="PDB" id="8EWB">
    <property type="method" value="EM"/>
    <property type="resolution" value="2.87 A"/>
    <property type="chains" value="Ai=1-100"/>
</dbReference>
<dbReference type="PDB" id="8EWC">
    <property type="method" value="EM"/>
    <property type="resolution" value="2.45 A"/>
    <property type="chains" value="Ai=1-100"/>
</dbReference>
<dbReference type="PDB" id="8HFR">
    <property type="method" value="EM"/>
    <property type="resolution" value="2.64 A"/>
    <property type="chains" value="ia=1-100"/>
</dbReference>
<dbReference type="PDB" id="8K2D">
    <property type="method" value="EM"/>
    <property type="resolution" value="3.20 A"/>
    <property type="chains" value="Li=1-100"/>
</dbReference>
<dbReference type="PDB" id="8K82">
    <property type="method" value="EM"/>
    <property type="resolution" value="3.00 A"/>
    <property type="chains" value="Li=1-100"/>
</dbReference>
<dbReference type="PDB" id="8P4V">
    <property type="method" value="X-ray"/>
    <property type="resolution" value="3.16 A"/>
    <property type="chains" value="AJ/DK=1-100"/>
</dbReference>
<dbReference type="PDB" id="8P8M">
    <property type="method" value="EM"/>
    <property type="resolution" value="2.66 A"/>
    <property type="chains" value="RI=1-100"/>
</dbReference>
<dbReference type="PDB" id="8P8N">
    <property type="method" value="EM"/>
    <property type="resolution" value="2.15 A"/>
    <property type="chains" value="RI=1-100"/>
</dbReference>
<dbReference type="PDB" id="8P8U">
    <property type="method" value="EM"/>
    <property type="resolution" value="2.23 A"/>
    <property type="chains" value="RI=1-100"/>
</dbReference>
<dbReference type="PDB" id="8P9A">
    <property type="method" value="X-ray"/>
    <property type="resolution" value="2.90 A"/>
    <property type="chains" value="AJ/DK=1-100"/>
</dbReference>
<dbReference type="PDB" id="8PFR">
    <property type="method" value="EM"/>
    <property type="resolution" value="2.15 A"/>
    <property type="chains" value="RI=1-100"/>
</dbReference>
<dbReference type="PDB" id="8T2X">
    <property type="method" value="EM"/>
    <property type="resolution" value="2.46 A"/>
    <property type="chains" value="Ai=1-100"/>
</dbReference>
<dbReference type="PDB" id="8T2Y">
    <property type="method" value="EM"/>
    <property type="resolution" value="2.20 A"/>
    <property type="chains" value="Ai=1-100"/>
</dbReference>
<dbReference type="PDB" id="8T2Z">
    <property type="method" value="EM"/>
    <property type="resolution" value="2.40 A"/>
    <property type="chains" value="Ai=1-100"/>
</dbReference>
<dbReference type="PDB" id="8T30">
    <property type="method" value="EM"/>
    <property type="resolution" value="2.88 A"/>
    <property type="chains" value="Ai=1-100"/>
</dbReference>
<dbReference type="PDB" id="8T3A">
    <property type="method" value="EM"/>
    <property type="resolution" value="2.86 A"/>
    <property type="chains" value="Ai=1-100"/>
</dbReference>
<dbReference type="PDB" id="8T3B">
    <property type="method" value="EM"/>
    <property type="resolution" value="3.08 A"/>
    <property type="chains" value="Ai=1-100"/>
</dbReference>
<dbReference type="PDB" id="8T3C">
    <property type="method" value="EM"/>
    <property type="resolution" value="3.86 A"/>
    <property type="chains" value="Ai=1-100"/>
</dbReference>
<dbReference type="PDB" id="8T3D">
    <property type="method" value="EM"/>
    <property type="resolution" value="2.95 A"/>
    <property type="chains" value="Ai=1-100"/>
</dbReference>
<dbReference type="PDB" id="8T3E">
    <property type="method" value="EM"/>
    <property type="resolution" value="3.04 A"/>
    <property type="chains" value="Ai=1-100"/>
</dbReference>
<dbReference type="PDB" id="8T3F">
    <property type="method" value="EM"/>
    <property type="resolution" value="3.09 A"/>
    <property type="chains" value="Ai=1-100"/>
</dbReference>
<dbReference type="PDB" id="8UT0">
    <property type="method" value="EM"/>
    <property type="resolution" value="3.22 A"/>
    <property type="chains" value="Lk=2-100"/>
</dbReference>
<dbReference type="PDB" id="8UTI">
    <property type="method" value="EM"/>
    <property type="resolution" value="3.13 A"/>
    <property type="chains" value="Lk=2-100"/>
</dbReference>
<dbReference type="PDB" id="8V83">
    <property type="method" value="EM"/>
    <property type="resolution" value="2.53 A"/>
    <property type="chains" value="i=1-100"/>
</dbReference>
<dbReference type="PDB" id="8V84">
    <property type="method" value="EM"/>
    <property type="resolution" value="2.70 A"/>
    <property type="chains" value="i=1-100"/>
</dbReference>
<dbReference type="PDB" id="8V87">
    <property type="method" value="EM"/>
    <property type="resolution" value="2.66 A"/>
    <property type="chains" value="i=1-100"/>
</dbReference>
<dbReference type="PDB" id="8XU8">
    <property type="method" value="EM"/>
    <property type="resolution" value="3.40 A"/>
    <property type="chains" value="k=2-100"/>
</dbReference>
<dbReference type="PDB" id="8Y0U">
    <property type="method" value="EM"/>
    <property type="resolution" value="3.59 A"/>
    <property type="chains" value="Li=1-100"/>
</dbReference>
<dbReference type="PDB" id="8YLD">
    <property type="method" value="EM"/>
    <property type="resolution" value="3.90 A"/>
    <property type="chains" value="k=2-100"/>
</dbReference>
<dbReference type="PDB" id="8YLR">
    <property type="method" value="EM"/>
    <property type="resolution" value="3.90 A"/>
    <property type="chains" value="k=2-100"/>
</dbReference>
<dbReference type="PDB" id="8Z70">
    <property type="method" value="EM"/>
    <property type="resolution" value="3.20 A"/>
    <property type="chains" value="k=2-100"/>
</dbReference>
<dbReference type="PDB" id="8Z71">
    <property type="method" value="EM"/>
    <property type="resolution" value="3.60 A"/>
    <property type="chains" value="k=2-100"/>
</dbReference>
<dbReference type="PDB" id="9F9S">
    <property type="method" value="EM"/>
    <property type="resolution" value="2.90 A"/>
    <property type="chains" value="Li/Mi=1-100"/>
</dbReference>
<dbReference type="PDBsum" id="3J6X"/>
<dbReference type="PDBsum" id="3J6Y"/>
<dbReference type="PDBsum" id="3J77"/>
<dbReference type="PDBsum" id="3J78"/>
<dbReference type="PDBsum" id="3JCT"/>
<dbReference type="PDBsum" id="4U3M"/>
<dbReference type="PDBsum" id="4U3N"/>
<dbReference type="PDBsum" id="4U3U"/>
<dbReference type="PDBsum" id="4U4N"/>
<dbReference type="PDBsum" id="4U4O"/>
<dbReference type="PDBsum" id="4U4Q"/>
<dbReference type="PDBsum" id="4U4R"/>
<dbReference type="PDBsum" id="4U4U"/>
<dbReference type="PDBsum" id="4U4Y"/>
<dbReference type="PDBsum" id="4U4Z"/>
<dbReference type="PDBsum" id="4U50"/>
<dbReference type="PDBsum" id="4U51"/>
<dbReference type="PDBsum" id="4U52"/>
<dbReference type="PDBsum" id="4U53"/>
<dbReference type="PDBsum" id="4U55"/>
<dbReference type="PDBsum" id="4U56"/>
<dbReference type="PDBsum" id="4U6F"/>
<dbReference type="PDBsum" id="4V6I"/>
<dbReference type="PDBsum" id="4V7F"/>
<dbReference type="PDBsum" id="4V88"/>
<dbReference type="PDBsum" id="4V8T"/>
<dbReference type="PDBsum" id="4V8Y"/>
<dbReference type="PDBsum" id="4V8Z"/>
<dbReference type="PDBsum" id="4V91"/>
<dbReference type="PDBsum" id="5APN"/>
<dbReference type="PDBsum" id="5APO"/>
<dbReference type="PDBsum" id="5DAT"/>
<dbReference type="PDBsum" id="5DC3"/>
<dbReference type="PDBsum" id="5DGE"/>
<dbReference type="PDBsum" id="5DGF"/>
<dbReference type="PDBsum" id="5DGV"/>
<dbReference type="PDBsum" id="5FCI"/>
<dbReference type="PDBsum" id="5FCJ"/>
<dbReference type="PDBsum" id="5GAK"/>
<dbReference type="PDBsum" id="5H4P"/>
<dbReference type="PDBsum" id="5I4L"/>
<dbReference type="PDBsum" id="5JCS"/>
<dbReference type="PDBsum" id="5JUO"/>
<dbReference type="PDBsum" id="5JUP"/>
<dbReference type="PDBsum" id="5JUS"/>
<dbReference type="PDBsum" id="5JUT"/>
<dbReference type="PDBsum" id="5JUU"/>
<dbReference type="PDBsum" id="5LYB"/>
<dbReference type="PDBsum" id="5M1J"/>
<dbReference type="PDBsum" id="5MC6"/>
<dbReference type="PDBsum" id="5MEI"/>
<dbReference type="PDBsum" id="5NDG"/>
<dbReference type="PDBsum" id="5NDV"/>
<dbReference type="PDBsum" id="5NDW"/>
<dbReference type="PDBsum" id="5OBM"/>
<dbReference type="PDBsum" id="5ON6"/>
<dbReference type="PDBsum" id="5T62"/>
<dbReference type="PDBsum" id="5T6R"/>
<dbReference type="PDBsum" id="5TBW"/>
<dbReference type="PDBsum" id="5TGA"/>
<dbReference type="PDBsum" id="5TGM"/>
<dbReference type="PDBsum" id="5Z3G"/>
<dbReference type="PDBsum" id="6C0F"/>
<dbReference type="PDBsum" id="6CB1"/>
<dbReference type="PDBsum" id="6ELZ"/>
<dbReference type="PDBsum" id="6FT6"/>
<dbReference type="PDBsum" id="6GQ1"/>
<dbReference type="PDBsum" id="6GQB"/>
<dbReference type="PDBsum" id="6GQV"/>
<dbReference type="PDBsum" id="6HD7"/>
<dbReference type="PDBsum" id="6HHQ"/>
<dbReference type="PDBsum" id="6I7O"/>
<dbReference type="PDBsum" id="6M62"/>
<dbReference type="PDBsum" id="6N8J"/>
<dbReference type="PDBsum" id="6N8K"/>
<dbReference type="PDBsum" id="6N8L"/>
<dbReference type="PDBsum" id="6N8M"/>
<dbReference type="PDBsum" id="6N8N"/>
<dbReference type="PDBsum" id="6N8O"/>
<dbReference type="PDBsum" id="6OIG"/>
<dbReference type="PDBsum" id="6Q8Y"/>
<dbReference type="PDBsum" id="6QIK"/>
<dbReference type="PDBsum" id="6QT0"/>
<dbReference type="PDBsum" id="6QTZ"/>
<dbReference type="PDBsum" id="6R84"/>
<dbReference type="PDBsum" id="6R86"/>
<dbReference type="PDBsum" id="6R87"/>
<dbReference type="PDBsum" id="6RI5"/>
<dbReference type="PDBsum" id="6RZZ"/>
<dbReference type="PDBsum" id="6S05"/>
<dbReference type="PDBsum" id="6S47"/>
<dbReference type="PDBsum" id="6SNT"/>
<dbReference type="PDBsum" id="6SV4"/>
<dbReference type="PDBsum" id="6T4Q"/>
<dbReference type="PDBsum" id="6T7I"/>
<dbReference type="PDBsum" id="6T7T"/>
<dbReference type="PDBsum" id="6T83"/>
<dbReference type="PDBsum" id="6TB3"/>
<dbReference type="PDBsum" id="6TNU"/>
<dbReference type="PDBsum" id="6WOO"/>
<dbReference type="PDBsum" id="6XIQ"/>
<dbReference type="PDBsum" id="6XIR"/>
<dbReference type="PDBsum" id="6YLG"/>
<dbReference type="PDBsum" id="6YLH"/>
<dbReference type="PDBsum" id="6YLX"/>
<dbReference type="PDBsum" id="6YLY"/>
<dbReference type="PDBsum" id="6Z6J"/>
<dbReference type="PDBsum" id="6Z6K"/>
<dbReference type="PDBsum" id="7AZY"/>
<dbReference type="PDBsum" id="7B7D"/>
<dbReference type="PDBsum" id="7BT6"/>
<dbReference type="PDBsum" id="7BTB"/>
<dbReference type="PDBsum" id="7MPI"/>
<dbReference type="PDBsum" id="7MPJ"/>
<dbReference type="PDBsum" id="7N8B"/>
<dbReference type="PDBsum" id="7NAC"/>
<dbReference type="PDBsum" id="7NRC"/>
<dbReference type="PDBsum" id="7NRD"/>
<dbReference type="PDBsum" id="7OF1"/>
<dbReference type="PDBsum" id="7OH3"/>
<dbReference type="PDBsum" id="7OHP"/>
<dbReference type="PDBsum" id="7OHQ"/>
<dbReference type="PDBsum" id="7OHR"/>
<dbReference type="PDBsum" id="7OHS"/>
<dbReference type="PDBsum" id="7OHU"/>
<dbReference type="PDBsum" id="7OHV"/>
<dbReference type="PDBsum" id="7OHW"/>
<dbReference type="PDBsum" id="7OHX"/>
<dbReference type="PDBsum" id="7OSA"/>
<dbReference type="PDBsum" id="7OSM"/>
<dbReference type="PDBsum" id="7R6K"/>
<dbReference type="PDBsum" id="7R6Q"/>
<dbReference type="PDBsum" id="7R7A"/>
<dbReference type="PDBsum" id="7RR5"/>
<dbReference type="PDBsum" id="7TOO"/>
<dbReference type="PDBsum" id="7TOP"/>
<dbReference type="PDBsum" id="7U0H"/>
<dbReference type="PDBsum" id="7UG6"/>
<dbReference type="PDBsum" id="7UOO"/>
<dbReference type="PDBsum" id="7UQB"/>
<dbReference type="PDBsum" id="7UQZ"/>
<dbReference type="PDBsum" id="7V08"/>
<dbReference type="PDBsum" id="7Z34"/>
<dbReference type="PDBsum" id="7ZPQ"/>
<dbReference type="PDBsum" id="7ZRS"/>
<dbReference type="PDBsum" id="7ZS5"/>
<dbReference type="PDBsum" id="7ZUW"/>
<dbReference type="PDBsum" id="7ZUX"/>
<dbReference type="PDBsum" id="7ZW0"/>
<dbReference type="PDBsum" id="8AAF"/>
<dbReference type="PDBsum" id="8AGT"/>
<dbReference type="PDBsum" id="8AGU"/>
<dbReference type="PDBsum" id="8AGV"/>
<dbReference type="PDBsum" id="8AGW"/>
<dbReference type="PDBsum" id="8AGX"/>
<dbReference type="PDBsum" id="8AGZ"/>
<dbReference type="PDBsum" id="8BIP"/>
<dbReference type="PDBsum" id="8BJQ"/>
<dbReference type="PDBsum" id="8BN3"/>
<dbReference type="PDBsum" id="8BQD"/>
<dbReference type="PDBsum" id="8BQX"/>
<dbReference type="PDBsum" id="8CCS"/>
<dbReference type="PDBsum" id="8CDL"/>
<dbReference type="PDBsum" id="8CDR"/>
<dbReference type="PDBsum" id="8CEH"/>
<dbReference type="PDBsum" id="8CF5"/>
<dbReference type="PDBsum" id="8CG8"/>
<dbReference type="PDBsum" id="8CGN"/>
<dbReference type="PDBsum" id="8CIV"/>
<dbReference type="PDBsum" id="8CKU"/>
<dbReference type="PDBsum" id="8CMJ"/>
<dbReference type="PDBsum" id="8E5T"/>
<dbReference type="PDBsum" id="8EUB"/>
<dbReference type="PDBsum" id="8EVP"/>
<dbReference type="PDBsum" id="8EVQ"/>
<dbReference type="PDBsum" id="8EVR"/>
<dbReference type="PDBsum" id="8EVS"/>
<dbReference type="PDBsum" id="8EVT"/>
<dbReference type="PDBsum" id="8EWB"/>
<dbReference type="PDBsum" id="8EWC"/>
<dbReference type="PDBsum" id="8HFR"/>
<dbReference type="PDBsum" id="8K2D"/>
<dbReference type="PDBsum" id="8K82"/>
<dbReference type="PDBsum" id="8P4V"/>
<dbReference type="PDBsum" id="8P8M"/>
<dbReference type="PDBsum" id="8P8N"/>
<dbReference type="PDBsum" id="8P8U"/>
<dbReference type="PDBsum" id="8P9A"/>
<dbReference type="PDBsum" id="8PFR"/>
<dbReference type="PDBsum" id="8T2X"/>
<dbReference type="PDBsum" id="8T2Y"/>
<dbReference type="PDBsum" id="8T2Z"/>
<dbReference type="PDBsum" id="8T30"/>
<dbReference type="PDBsum" id="8T3A"/>
<dbReference type="PDBsum" id="8T3B"/>
<dbReference type="PDBsum" id="8T3C"/>
<dbReference type="PDBsum" id="8T3D"/>
<dbReference type="PDBsum" id="8T3E"/>
<dbReference type="PDBsum" id="8T3F"/>
<dbReference type="PDBsum" id="8UT0"/>
<dbReference type="PDBsum" id="8UTI"/>
<dbReference type="PDBsum" id="8V83"/>
<dbReference type="PDBsum" id="8V84"/>
<dbReference type="PDBsum" id="8V87"/>
<dbReference type="PDBsum" id="8XU8"/>
<dbReference type="PDBsum" id="8Y0U"/>
<dbReference type="PDBsum" id="8YLD"/>
<dbReference type="PDBsum" id="8YLR"/>
<dbReference type="PDBsum" id="8Z70"/>
<dbReference type="PDBsum" id="8Z71"/>
<dbReference type="PDBsum" id="9F9S"/>
<dbReference type="EMDB" id="EMD-0047"/>
<dbReference type="EMDB" id="EMD-0048"/>
<dbReference type="EMDB" id="EMD-0049"/>
<dbReference type="EMDB" id="EMD-0202"/>
<dbReference type="EMDB" id="EMD-0369"/>
<dbReference type="EMDB" id="EMD-0370"/>
<dbReference type="EMDB" id="EMD-0371"/>
<dbReference type="EMDB" id="EMD-0372"/>
<dbReference type="EMDB" id="EMD-0373"/>
<dbReference type="EMDB" id="EMD-0374"/>
<dbReference type="EMDB" id="EMD-10068"/>
<dbReference type="EMDB" id="EMD-10071"/>
<dbReference type="EMDB" id="EMD-10098"/>
<dbReference type="EMDB" id="EMD-10262"/>
<dbReference type="EMDB" id="EMD-10315"/>
<dbReference type="EMDB" id="EMD-10377"/>
<dbReference type="EMDB" id="EMD-10396"/>
<dbReference type="EMDB" id="EMD-10397"/>
<dbReference type="EMDB" id="EMD-10398"/>
<dbReference type="EMDB" id="EMD-10431"/>
<dbReference type="EMDB" id="EMD-10537"/>
<dbReference type="EMDB" id="EMD-10838"/>
<dbReference type="EMDB" id="EMD-10839"/>
<dbReference type="EMDB" id="EMD-10841"/>
<dbReference type="EMDB" id="EMD-10842"/>
<dbReference type="EMDB" id="EMD-11096"/>
<dbReference type="EMDB" id="EMD-11097"/>
<dbReference type="EMDB" id="EMD-11951"/>
<dbReference type="EMDB" id="EMD-12081"/>
<dbReference type="EMDB" id="EMD-12534"/>
<dbReference type="EMDB" id="EMD-12535"/>
<dbReference type="EMDB" id="EMD-12866"/>
<dbReference type="EMDB" id="EMD-12892"/>
<dbReference type="EMDB" id="EMD-12904"/>
<dbReference type="EMDB" id="EMD-12905"/>
<dbReference type="EMDB" id="EMD-12906"/>
<dbReference type="EMDB" id="EMD-12907"/>
<dbReference type="EMDB" id="EMD-12909"/>
<dbReference type="EMDB" id="EMD-12910"/>
<dbReference type="EMDB" id="EMD-12911"/>
<dbReference type="EMDB" id="EMD-12912"/>
<dbReference type="EMDB" id="EMD-14471"/>
<dbReference type="EMDB" id="EMD-14861"/>
<dbReference type="EMDB" id="EMD-14921"/>
<dbReference type="EMDB" id="EMD-14926"/>
<dbReference type="EMDB" id="EMD-14978"/>
<dbReference type="EMDB" id="EMD-14979"/>
<dbReference type="EMDB" id="EMD-14990"/>
<dbReference type="EMDB" id="EMD-15296"/>
<dbReference type="EMDB" id="EMD-15423"/>
<dbReference type="EMDB" id="EMD-15424"/>
<dbReference type="EMDB" id="EMD-15425"/>
<dbReference type="EMDB" id="EMD-15426"/>
<dbReference type="EMDB" id="EMD-15427"/>
<dbReference type="EMDB" id="EMD-15428"/>
<dbReference type="EMDB" id="EMD-16086"/>
<dbReference type="EMDB" id="EMD-16090"/>
<dbReference type="EMDB" id="EMD-16127"/>
<dbReference type="EMDB" id="EMD-16182"/>
<dbReference type="EMDB" id="EMD-16191"/>
<dbReference type="EMDB" id="EMD-16563"/>
<dbReference type="EMDB" id="EMD-16591"/>
<dbReference type="EMDB" id="EMD-16594"/>
<dbReference type="EMDB" id="EMD-16609"/>
<dbReference type="EMDB" id="EMD-16616"/>
<dbReference type="EMDB" id="EMD-16634"/>
<dbReference type="EMDB" id="EMD-16648"/>
<dbReference type="EMDB" id="EMD-16684"/>
<dbReference type="EMDB" id="EMD-16702"/>
<dbReference type="EMDB" id="EMD-16729"/>
<dbReference type="EMDB" id="EMD-17549"/>
<dbReference type="EMDB" id="EMD-17550"/>
<dbReference type="EMDB" id="EMD-17552"/>
<dbReference type="EMDB" id="EMD-17653"/>
<dbReference type="EMDB" id="EMD-20077"/>
<dbReference type="EMDB" id="EMD-21859"/>
<dbReference type="EMDB" id="EMD-22196"/>
<dbReference type="EMDB" id="EMD-22198"/>
<dbReference type="EMDB" id="EMD-23934"/>
<dbReference type="EMDB" id="EMD-23935"/>
<dbReference type="EMDB" id="EMD-24235"/>
<dbReference type="EMDB" id="EMD-24269"/>
<dbReference type="EMDB" id="EMD-24280"/>
<dbReference type="EMDB" id="EMD-24286"/>
<dbReference type="EMDB" id="EMD-24296"/>
<dbReference type="EMDB" id="EMD-24652"/>
<dbReference type="EMDB" id="EMD-26033"/>
<dbReference type="EMDB" id="EMD-26034"/>
<dbReference type="EMDB" id="EMD-26259"/>
<dbReference type="EMDB" id="EMD-26485"/>
<dbReference type="EMDB" id="EMD-26651"/>
<dbReference type="EMDB" id="EMD-26686"/>
<dbReference type="EMDB" id="EMD-26703"/>
<dbReference type="EMDB" id="EMD-26941"/>
<dbReference type="EMDB" id="EMD-27919"/>
<dbReference type="EMDB" id="EMD-28610"/>
<dbReference type="EMDB" id="EMD-28632"/>
<dbReference type="EMDB" id="EMD-28633"/>
<dbReference type="EMDB" id="EMD-28634"/>
<dbReference type="EMDB" id="EMD-28635"/>
<dbReference type="EMDB" id="EMD-28636"/>
<dbReference type="EMDB" id="EMD-28642"/>
<dbReference type="EMDB" id="EMD-28643"/>
<dbReference type="EMDB" id="EMD-30108"/>
<dbReference type="EMDB" id="EMD-30170"/>
<dbReference type="EMDB" id="EMD-30174"/>
<dbReference type="EMDB" id="EMD-3461"/>
<dbReference type="EMDB" id="EMD-34725"/>
<dbReference type="EMDB" id="EMD-36839"/>
<dbReference type="EMDB" id="EMD-36945"/>
<dbReference type="EMDB" id="EMD-38660"/>
<dbReference type="EMDB" id="EMD-40990"/>
<dbReference type="EMDB" id="EMD-40991"/>
<dbReference type="EMDB" id="EMD-40992"/>
<dbReference type="EMDB" id="EMD-40993"/>
<dbReference type="EMDB" id="EMD-40997"/>
<dbReference type="EMDB" id="EMD-40998"/>
<dbReference type="EMDB" id="EMD-40999"/>
<dbReference type="EMDB" id="EMD-41000"/>
<dbReference type="EMDB" id="EMD-41001"/>
<dbReference type="EMDB" id="EMD-41002"/>
<dbReference type="EMDB" id="EMD-4140"/>
<dbReference type="EMDB" id="EMD-42525"/>
<dbReference type="EMDB" id="EMD-42540"/>
<dbReference type="EMDB" id="EMD-43017"/>
<dbReference type="EMDB" id="EMD-4302"/>
<dbReference type="EMDB" id="EMD-43021"/>
<dbReference type="EMDB" id="EMD-43027"/>
<dbReference type="EMDB" id="EMD-4427"/>
<dbReference type="EMDB" id="EMD-4474"/>
<dbReference type="EMDB" id="EMD-4560"/>
<dbReference type="EMDB" id="EMD-4630"/>
<dbReference type="EMDB" id="EMD-4636"/>
<dbReference type="EMDB" id="EMD-4751"/>
<dbReference type="EMDB" id="EMD-4752"/>
<dbReference type="EMDB" id="EMD-4753"/>
<dbReference type="EMDB" id="EMD-4884"/>
<dbReference type="EMDB" id="EMD-50259"/>
<dbReference type="EMDB" id="EMD-6878"/>
<dbReference type="EMDB" id="EMD-7324"/>
<dbReference type="EMDB" id="EMD-7445"/>
<dbReference type="EMDB" id="EMD-8362"/>
<dbReference type="EMDB" id="EMD-8368"/>
<dbReference type="SMR" id="P05745"/>
<dbReference type="BioGRID" id="35372">
    <property type="interactions" value="295"/>
</dbReference>
<dbReference type="ComplexPortal" id="CPX-1601">
    <property type="entry name" value="60S cytosolic large ribosomal subunit"/>
</dbReference>
<dbReference type="FunCoup" id="P05745">
    <property type="interactions" value="1003"/>
</dbReference>
<dbReference type="IntAct" id="P05745">
    <property type="interactions" value="40"/>
</dbReference>
<dbReference type="MINT" id="P05745"/>
<dbReference type="STRING" id="4932.YMR194W"/>
<dbReference type="iPTMnet" id="P05745"/>
<dbReference type="PaxDb" id="4932-YMR194W"/>
<dbReference type="PeptideAtlas" id="P05745"/>
<dbReference type="TopDownProteomics" id="P05745"/>
<dbReference type="EnsemblFungi" id="YMR194W_mRNA">
    <property type="protein sequence ID" value="YMR194W"/>
    <property type="gene ID" value="YMR194W"/>
</dbReference>
<dbReference type="GeneID" id="855232"/>
<dbReference type="KEGG" id="sce:YMR194W"/>
<dbReference type="AGR" id="SGD:S000004807"/>
<dbReference type="SGD" id="S000004807">
    <property type="gene designation" value="RPL36A"/>
</dbReference>
<dbReference type="VEuPathDB" id="FungiDB:YMR194W"/>
<dbReference type="eggNOG" id="KOG3452">
    <property type="taxonomic scope" value="Eukaryota"/>
</dbReference>
<dbReference type="GeneTree" id="ENSGT00940000169339"/>
<dbReference type="HOGENOM" id="CLU_140672_1_0_1"/>
<dbReference type="InParanoid" id="P05745"/>
<dbReference type="OMA" id="WGINRGH"/>
<dbReference type="OrthoDB" id="9616667at2759"/>
<dbReference type="BioCyc" id="YEAST:G3O-32881-MONOMER"/>
<dbReference type="Reactome" id="R-SCE-156827">
    <property type="pathway name" value="L13a-mediated translational silencing of Ceruloplasmin expression"/>
</dbReference>
<dbReference type="Reactome" id="R-SCE-1799339">
    <property type="pathway name" value="SRP-dependent cotranslational protein targeting to membrane"/>
</dbReference>
<dbReference type="Reactome" id="R-SCE-72689">
    <property type="pathway name" value="Formation of a pool of free 40S subunits"/>
</dbReference>
<dbReference type="Reactome" id="R-SCE-72706">
    <property type="pathway name" value="GTP hydrolysis and joining of the 60S ribosomal subunit"/>
</dbReference>
<dbReference type="Reactome" id="R-SCE-975956">
    <property type="pathway name" value="Nonsense Mediated Decay (NMD) independent of the Exon Junction Complex (EJC)"/>
</dbReference>
<dbReference type="Reactome" id="R-SCE-975957">
    <property type="pathway name" value="Nonsense Mediated Decay (NMD) enhanced by the Exon Junction Complex (EJC)"/>
</dbReference>
<dbReference type="BioGRID-ORCS" id="855232">
    <property type="hits" value="0 hits in 10 CRISPR screens"/>
</dbReference>
<dbReference type="PRO" id="PR:P05745"/>
<dbReference type="Proteomes" id="UP000002311">
    <property type="component" value="Chromosome XIII"/>
</dbReference>
<dbReference type="RNAct" id="P05745">
    <property type="molecule type" value="protein"/>
</dbReference>
<dbReference type="GO" id="GO:0005829">
    <property type="term" value="C:cytosol"/>
    <property type="evidence" value="ECO:0000304"/>
    <property type="project" value="Reactome"/>
</dbReference>
<dbReference type="GO" id="GO:0022625">
    <property type="term" value="C:cytosolic large ribosomal subunit"/>
    <property type="evidence" value="ECO:0000314"/>
    <property type="project" value="SGD"/>
</dbReference>
<dbReference type="GO" id="GO:0003723">
    <property type="term" value="F:RNA binding"/>
    <property type="evidence" value="ECO:0000314"/>
    <property type="project" value="SGD"/>
</dbReference>
<dbReference type="GO" id="GO:0003735">
    <property type="term" value="F:structural constituent of ribosome"/>
    <property type="evidence" value="ECO:0000314"/>
    <property type="project" value="SGD"/>
</dbReference>
<dbReference type="GO" id="GO:0002181">
    <property type="term" value="P:cytoplasmic translation"/>
    <property type="evidence" value="ECO:0000314"/>
    <property type="project" value="SGD"/>
</dbReference>
<dbReference type="FunFam" id="1.10.10.1760:FF:000003">
    <property type="entry name" value="60S ribosomal protein L36"/>
    <property type="match status" value="1"/>
</dbReference>
<dbReference type="Gene3D" id="1.10.10.1760">
    <property type="entry name" value="60S ribosomal protein L36"/>
    <property type="match status" value="1"/>
</dbReference>
<dbReference type="InterPro" id="IPR000509">
    <property type="entry name" value="Ribosomal_eL36"/>
</dbReference>
<dbReference type="InterPro" id="IPR038097">
    <property type="entry name" value="Ribosomal_eL36_sf"/>
</dbReference>
<dbReference type="PANTHER" id="PTHR10114">
    <property type="entry name" value="60S RIBOSOMAL PROTEIN L36"/>
    <property type="match status" value="1"/>
</dbReference>
<dbReference type="Pfam" id="PF01158">
    <property type="entry name" value="Ribosomal_L36e"/>
    <property type="match status" value="1"/>
</dbReference>
<dbReference type="PROSITE" id="PS01190">
    <property type="entry name" value="RIBOSOMAL_L36E"/>
    <property type="match status" value="1"/>
</dbReference>
<name>RL36A_YEAST</name>
<protein>
    <recommendedName>
        <fullName evidence="5">Large ribosomal subunit protein eL36A</fullName>
    </recommendedName>
    <alternativeName>
        <fullName evidence="6">60S ribosomal protein L36-A</fullName>
    </alternativeName>
    <alternativeName>
        <fullName>L39</fullName>
    </alternativeName>
    <alternativeName>
        <fullName>YL39</fullName>
    </alternativeName>
</protein>
<comment type="function">
    <text evidence="8">Component of the ribosome, a large ribonucleoprotein complex responsible for the synthesis of proteins in the cell. The small ribosomal subunit (SSU) binds messenger RNAs (mRNAs) and translates the encoded message by selecting cognate aminoacyl-transfer RNA (tRNA) molecules. The large subunit (LSU) contains the ribosomal catalytic site termed the peptidyl transferase center (PTC), which catalyzes the formation of peptide bonds, thereby polymerizing the amino acids delivered by tRNAs into a polypeptide chain. The nascent polypeptides leave the ribosome through a tunnel in the LSU and interact with protein factors that function in enzymatic processing, targeting, and the membrane insertion of nascent chains at the exit of the ribosomal tunnel.</text>
</comment>
<comment type="subunit">
    <text evidence="4 9">Component of the large ribosomal subunit (LSU). Mature yeast ribosomes consist of a small (40S) and a large (60S) subunit. The 40S small subunit contains 1 molecule of ribosomal RNA (18S rRNA) and 33 different proteins (encoded by 57 genes). The large 60S subunit contains 3 rRNA molecules (25S, 5.8S and 5S rRNA) and 46 different proteins (encoded by 81 genes) (PubMed:22096102, PubMed:9559554).</text>
</comment>
<comment type="subcellular location">
    <subcellularLocation>
        <location evidence="2 4">Cytoplasm</location>
    </subcellularLocation>
</comment>
<comment type="PTM">
    <text evidence="1">N-terminally acetylated by acetyltransferase NatA.</text>
</comment>
<comment type="miscellaneous">
    <text evidence="3">Present with 31600 molecules/cell in log phase SD medium.</text>
</comment>
<comment type="miscellaneous">
    <text evidence="7">There are 2 genes for eL36 in yeast.</text>
</comment>
<comment type="similarity">
    <text evidence="7">Belongs to the eukaryotic ribosomal protein eL36 family.</text>
</comment>
<gene>
    <name evidence="6" type="primary">RPL36A</name>
    <name type="synonym">RPL39A</name>
    <name type="ordered locus">YMR194W</name>
    <name type="ORF">YM9646.06</name>
</gene>
<evidence type="ECO:0000269" key="1">
    <source>
    </source>
</evidence>
<evidence type="ECO:0000269" key="2">
    <source>
    </source>
</evidence>
<evidence type="ECO:0000269" key="3">
    <source>
    </source>
</evidence>
<evidence type="ECO:0000269" key="4">
    <source>
    </source>
</evidence>
<evidence type="ECO:0000303" key="5">
    <source>
    </source>
</evidence>
<evidence type="ECO:0000303" key="6">
    <source>
    </source>
</evidence>
<evidence type="ECO:0000305" key="7"/>
<evidence type="ECO:0000305" key="8">
    <source>
    </source>
</evidence>
<evidence type="ECO:0000305" key="9">
    <source>
    </source>
</evidence>
<evidence type="ECO:0007829" key="10">
    <source>
        <dbReference type="PDB" id="7R6K"/>
    </source>
</evidence>
<evidence type="ECO:0007829" key="11">
    <source>
        <dbReference type="PDB" id="7R6Q"/>
    </source>
</evidence>
<sequence length="100" mass="11124">MTVKTGIAIGLNKGKKVTSMTPAPKISYKKGAASNRTKFVRSLVREIAGLSPYERRLIDLIRNSGEKRARKVAKKRLGSFTRAKAKVEEMNNIIAASRRH</sequence>
<reference key="1">
    <citation type="journal article" date="1997" name="Nature">
        <title>The nucleotide sequence of Saccharomyces cerevisiae chromosome XIII.</title>
        <authorList>
            <person name="Bowman S."/>
            <person name="Churcher C.M."/>
            <person name="Badcock K."/>
            <person name="Brown D."/>
            <person name="Chillingworth T."/>
            <person name="Connor R."/>
            <person name="Dedman K."/>
            <person name="Devlin K."/>
            <person name="Gentles S."/>
            <person name="Hamlin N."/>
            <person name="Hunt S."/>
            <person name="Jagels K."/>
            <person name="Lye G."/>
            <person name="Moule S."/>
            <person name="Odell C."/>
            <person name="Pearson D."/>
            <person name="Rajandream M.A."/>
            <person name="Rice P."/>
            <person name="Skelton J."/>
            <person name="Walsh S.V."/>
            <person name="Whitehead S."/>
            <person name="Barrell B.G."/>
        </authorList>
    </citation>
    <scope>NUCLEOTIDE SEQUENCE [LARGE SCALE GENOMIC DNA]</scope>
    <source>
        <strain>ATCC 204508 / S288c</strain>
    </source>
</reference>
<reference key="2">
    <citation type="journal article" date="2014" name="G3 (Bethesda)">
        <title>The reference genome sequence of Saccharomyces cerevisiae: Then and now.</title>
        <authorList>
            <person name="Engel S.R."/>
            <person name="Dietrich F.S."/>
            <person name="Fisk D.G."/>
            <person name="Binkley G."/>
            <person name="Balakrishnan R."/>
            <person name="Costanzo M.C."/>
            <person name="Dwight S.S."/>
            <person name="Hitz B.C."/>
            <person name="Karra K."/>
            <person name="Nash R.S."/>
            <person name="Weng S."/>
            <person name="Wong E.D."/>
            <person name="Lloyd P."/>
            <person name="Skrzypek M.S."/>
            <person name="Miyasato S.R."/>
            <person name="Simison M."/>
            <person name="Cherry J.M."/>
        </authorList>
    </citation>
    <scope>GENOME REANNOTATION</scope>
    <source>
        <strain>ATCC 204508 / S288c</strain>
    </source>
</reference>
<reference key="3">
    <citation type="journal article" date="1998" name="Yeast">
        <title>The list of cytoplasmic ribosomal proteins of Saccharomyces cerevisiae.</title>
        <authorList>
            <person name="Planta R.J."/>
            <person name="Mager W.H."/>
        </authorList>
    </citation>
    <scope>NOMENCLATURE</scope>
    <scope>SUBUNIT</scope>
</reference>
<reference key="4">
    <citation type="journal article" date="1999" name="J. Biol. Chem.">
        <title>The action of N-terminal acetyltransferases on yeast ribosomal proteins.</title>
        <authorList>
            <person name="Arnold R.J."/>
            <person name="Polevoda B."/>
            <person name="Reilly J.P."/>
            <person name="Sherman F."/>
        </authorList>
    </citation>
    <scope>CLEAVAGE OF INITIATOR METHIONINE</scope>
    <scope>ACETYLATION AT THR-2 BY NATA</scope>
</reference>
<reference key="5">
    <citation type="journal article" date="2003" name="Nature">
        <title>Global analysis of protein localization in budding yeast.</title>
        <authorList>
            <person name="Huh W.-K."/>
            <person name="Falvo J.V."/>
            <person name="Gerke L.C."/>
            <person name="Carroll A.S."/>
            <person name="Howson R.W."/>
            <person name="Weissman J.S."/>
            <person name="O'Shea E.K."/>
        </authorList>
    </citation>
    <scope>SUBCELLULAR LOCATION [LARGE SCALE ANALYSIS]</scope>
</reference>
<reference key="6">
    <citation type="journal article" date="2003" name="Nature">
        <title>Global analysis of protein expression in yeast.</title>
        <authorList>
            <person name="Ghaemmaghami S."/>
            <person name="Huh W.-K."/>
            <person name="Bower K."/>
            <person name="Howson R.W."/>
            <person name="Belle A."/>
            <person name="Dephoure N."/>
            <person name="O'Shea E.K."/>
            <person name="Weissman J.S."/>
        </authorList>
    </citation>
    <scope>LEVEL OF PROTEIN EXPRESSION [LARGE SCALE ANALYSIS]</scope>
</reference>
<reference key="7">
    <citation type="journal article" date="2014" name="Curr. Opin. Struct. Biol.">
        <title>A new system for naming ribosomal proteins.</title>
        <authorList>
            <person name="Ban N."/>
            <person name="Beckmann R."/>
            <person name="Cate J.H.D."/>
            <person name="Dinman J.D."/>
            <person name="Dragon F."/>
            <person name="Ellis S.R."/>
            <person name="Lafontaine D.L.J."/>
            <person name="Lindahl L."/>
            <person name="Liljas A."/>
            <person name="Lipton J.M."/>
            <person name="McAlear M.A."/>
            <person name="Moore P.B."/>
            <person name="Noller H.F."/>
            <person name="Ortega J."/>
            <person name="Panse V.G."/>
            <person name="Ramakrishnan V."/>
            <person name="Spahn C.M.T."/>
            <person name="Steitz T.A."/>
            <person name="Tchorzewski M."/>
            <person name="Tollervey D."/>
            <person name="Warren A.J."/>
            <person name="Williamson J.R."/>
            <person name="Wilson D."/>
            <person name="Yonath A."/>
            <person name="Yusupov M."/>
        </authorList>
    </citation>
    <scope>NOMENCLATURE</scope>
</reference>
<reference key="8">
    <citation type="journal article" date="2010" name="Science">
        <title>Crystal structure of the eukaryotic ribosome.</title>
        <authorList>
            <person name="Ben-Shem A."/>
            <person name="Jenner L."/>
            <person name="Yusupova G."/>
            <person name="Yusupov M."/>
        </authorList>
    </citation>
    <scope>X-RAY CRYSTALLOGRAPHY (4.0 ANGSTROMS) OF 80S RIBOSOME</scope>
</reference>
<reference key="9">
    <citation type="journal article" date="2011" name="Science">
        <title>The structure of the eukaryotic ribosome at 3.0 A resolution.</title>
        <authorList>
            <person name="Ben-Shem A."/>
            <person name="Garreau de Loubresse N."/>
            <person name="Melnikov S."/>
            <person name="Jenner L."/>
            <person name="Yusupova G."/>
            <person name="Yusupov M."/>
        </authorList>
    </citation>
    <scope>X-RAY CRYSTALLOGRAPHY (3.0 ANGSTROMS) OF 80S RIBOSOME</scope>
    <scope>SUBUNIT</scope>
    <scope>SUBCELLULAR LOCATION</scope>
</reference>
<keyword id="KW-0002">3D-structure</keyword>
<keyword id="KW-0007">Acetylation</keyword>
<keyword id="KW-0963">Cytoplasm</keyword>
<keyword id="KW-1185">Reference proteome</keyword>
<keyword id="KW-0687">Ribonucleoprotein</keyword>
<keyword id="KW-0689">Ribosomal protein</keyword>
<feature type="initiator methionine" description="Removed" evidence="1">
    <location>
        <position position="1"/>
    </location>
</feature>
<feature type="chain" id="PRO_0000195020" description="Large ribosomal subunit protein eL36A">
    <location>
        <begin position="2"/>
        <end position="100"/>
    </location>
</feature>
<feature type="modified residue" description="N-acetylthreonine" evidence="1">
    <location>
        <position position="2"/>
    </location>
</feature>
<feature type="helix" evidence="11">
    <location>
        <begin position="28"/>
        <end position="30"/>
    </location>
</feature>
<feature type="helix" evidence="11">
    <location>
        <begin position="35"/>
        <end position="48"/>
    </location>
</feature>
<feature type="helix" evidence="11">
    <location>
        <begin position="52"/>
        <end position="62"/>
    </location>
</feature>
<feature type="helix" evidence="10">
    <location>
        <begin position="66"/>
        <end position="77"/>
    </location>
</feature>
<feature type="helix" evidence="11">
    <location>
        <begin position="82"/>
        <end position="98"/>
    </location>
</feature>
<proteinExistence type="evidence at protein level"/>